<organism>
    <name type="scientific">Corynebacterium glutamicum (strain ATCC 13032 / DSM 20300 / JCM 1318 / BCRC 11384 / CCUG 27702 / LMG 3730 / NBRC 12168 / NCIMB 10025 / NRRL B-2784 / 534)</name>
    <dbReference type="NCBI Taxonomy" id="196627"/>
    <lineage>
        <taxon>Bacteria</taxon>
        <taxon>Bacillati</taxon>
        <taxon>Actinomycetota</taxon>
        <taxon>Actinomycetes</taxon>
        <taxon>Mycobacteriales</taxon>
        <taxon>Corynebacteriaceae</taxon>
        <taxon>Corynebacterium</taxon>
    </lineage>
</organism>
<sequence length="325" mass="35602">MSSPVISPETKTGKKILLAAPRGYCAGVDRAVETVERALEEYGAPIYVRKEIVHNRYVVDTLAEKGAIFVNEASEAPEGANMVFSAHGVSPMVHEEAAAKNIKAIDAACPLVTKVHKEVQRFDKQGFHILFIGHEGHEEVEGTMGHSVEKTHLVDGVAGIATLPEFLNDEPNLIWLSQTTLSVDETMEIVRELKVKFPQLQDPPSDDICYATQNRQVAVKAIAERCELMIVVGSRNSSNSVRLVEVAKQNGADNAYLVDYAREIDPAWFEGVETIGISSGASVPEILVQGVIERLAEFGYDDVEEVTSAAEKIVFALPRVLRHKN</sequence>
<accession>Q8NRM2</accession>
<name>ISPH_CORGL</name>
<protein>
    <recommendedName>
        <fullName evidence="1">4-hydroxy-3-methylbut-2-enyl diphosphate reductase</fullName>
        <shortName evidence="1">HMBPP reductase</shortName>
        <ecNumber evidence="1">1.17.7.4</ecNumber>
    </recommendedName>
</protein>
<feature type="chain" id="PRO_0000128808" description="4-hydroxy-3-methylbut-2-enyl diphosphate reductase">
    <location>
        <begin position="1"/>
        <end position="325"/>
    </location>
</feature>
<feature type="active site" description="Proton donor" evidence="1">
    <location>
        <position position="139"/>
    </location>
</feature>
<feature type="binding site" evidence="1">
    <location>
        <position position="25"/>
    </location>
    <ligand>
        <name>[4Fe-4S] cluster</name>
        <dbReference type="ChEBI" id="CHEBI:49883"/>
    </ligand>
</feature>
<feature type="binding site" evidence="1">
    <location>
        <position position="54"/>
    </location>
    <ligand>
        <name>(2E)-4-hydroxy-3-methylbut-2-enyl diphosphate</name>
        <dbReference type="ChEBI" id="CHEBI:128753"/>
    </ligand>
</feature>
<feature type="binding site" evidence="1">
    <location>
        <position position="54"/>
    </location>
    <ligand>
        <name>dimethylallyl diphosphate</name>
        <dbReference type="ChEBI" id="CHEBI:57623"/>
    </ligand>
</feature>
<feature type="binding site" evidence="1">
    <location>
        <position position="54"/>
    </location>
    <ligand>
        <name>isopentenyl diphosphate</name>
        <dbReference type="ChEBI" id="CHEBI:128769"/>
    </ligand>
</feature>
<feature type="binding site" evidence="1">
    <location>
        <position position="87"/>
    </location>
    <ligand>
        <name>(2E)-4-hydroxy-3-methylbut-2-enyl diphosphate</name>
        <dbReference type="ChEBI" id="CHEBI:128753"/>
    </ligand>
</feature>
<feature type="binding site" evidence="1">
    <location>
        <position position="87"/>
    </location>
    <ligand>
        <name>dimethylallyl diphosphate</name>
        <dbReference type="ChEBI" id="CHEBI:57623"/>
    </ligand>
</feature>
<feature type="binding site" evidence="1">
    <location>
        <position position="87"/>
    </location>
    <ligand>
        <name>isopentenyl diphosphate</name>
        <dbReference type="ChEBI" id="CHEBI:128769"/>
    </ligand>
</feature>
<feature type="binding site" evidence="1">
    <location>
        <position position="109"/>
    </location>
    <ligand>
        <name>[4Fe-4S] cluster</name>
        <dbReference type="ChEBI" id="CHEBI:49883"/>
    </ligand>
</feature>
<feature type="binding site" evidence="1">
    <location>
        <position position="137"/>
    </location>
    <ligand>
        <name>(2E)-4-hydroxy-3-methylbut-2-enyl diphosphate</name>
        <dbReference type="ChEBI" id="CHEBI:128753"/>
    </ligand>
</feature>
<feature type="binding site" evidence="1">
    <location>
        <position position="137"/>
    </location>
    <ligand>
        <name>dimethylallyl diphosphate</name>
        <dbReference type="ChEBI" id="CHEBI:57623"/>
    </ligand>
</feature>
<feature type="binding site" evidence="1">
    <location>
        <position position="137"/>
    </location>
    <ligand>
        <name>isopentenyl diphosphate</name>
        <dbReference type="ChEBI" id="CHEBI:128769"/>
    </ligand>
</feature>
<feature type="binding site" evidence="1">
    <location>
        <position position="179"/>
    </location>
    <ligand>
        <name>(2E)-4-hydroxy-3-methylbut-2-enyl diphosphate</name>
        <dbReference type="ChEBI" id="CHEBI:128753"/>
    </ligand>
</feature>
<feature type="binding site" evidence="1">
    <location>
        <position position="209"/>
    </location>
    <ligand>
        <name>[4Fe-4S] cluster</name>
        <dbReference type="ChEBI" id="CHEBI:49883"/>
    </ligand>
</feature>
<feature type="binding site" evidence="1">
    <location>
        <position position="237"/>
    </location>
    <ligand>
        <name>(2E)-4-hydroxy-3-methylbut-2-enyl diphosphate</name>
        <dbReference type="ChEBI" id="CHEBI:128753"/>
    </ligand>
</feature>
<feature type="binding site" evidence="1">
    <location>
        <position position="237"/>
    </location>
    <ligand>
        <name>dimethylallyl diphosphate</name>
        <dbReference type="ChEBI" id="CHEBI:57623"/>
    </ligand>
</feature>
<feature type="binding site" evidence="1">
    <location>
        <position position="237"/>
    </location>
    <ligand>
        <name>isopentenyl diphosphate</name>
        <dbReference type="ChEBI" id="CHEBI:128769"/>
    </ligand>
</feature>
<feature type="binding site" evidence="1">
    <location>
        <position position="238"/>
    </location>
    <ligand>
        <name>(2E)-4-hydroxy-3-methylbut-2-enyl diphosphate</name>
        <dbReference type="ChEBI" id="CHEBI:128753"/>
    </ligand>
</feature>
<feature type="binding site" evidence="1">
    <location>
        <position position="238"/>
    </location>
    <ligand>
        <name>dimethylallyl diphosphate</name>
        <dbReference type="ChEBI" id="CHEBI:57623"/>
    </ligand>
</feature>
<feature type="binding site" evidence="1">
    <location>
        <position position="238"/>
    </location>
    <ligand>
        <name>isopentenyl diphosphate</name>
        <dbReference type="ChEBI" id="CHEBI:128769"/>
    </ligand>
</feature>
<feature type="binding site" evidence="1">
    <location>
        <position position="239"/>
    </location>
    <ligand>
        <name>(2E)-4-hydroxy-3-methylbut-2-enyl diphosphate</name>
        <dbReference type="ChEBI" id="CHEBI:128753"/>
    </ligand>
</feature>
<feature type="binding site" evidence="1">
    <location>
        <position position="239"/>
    </location>
    <ligand>
        <name>dimethylallyl diphosphate</name>
        <dbReference type="ChEBI" id="CHEBI:57623"/>
    </ligand>
</feature>
<feature type="binding site" evidence="1">
    <location>
        <position position="239"/>
    </location>
    <ligand>
        <name>isopentenyl diphosphate</name>
        <dbReference type="ChEBI" id="CHEBI:128769"/>
    </ligand>
</feature>
<feature type="binding site" evidence="1">
    <location>
        <position position="282"/>
    </location>
    <ligand>
        <name>(2E)-4-hydroxy-3-methylbut-2-enyl diphosphate</name>
        <dbReference type="ChEBI" id="CHEBI:128753"/>
    </ligand>
</feature>
<feature type="binding site" evidence="1">
    <location>
        <position position="282"/>
    </location>
    <ligand>
        <name>dimethylallyl diphosphate</name>
        <dbReference type="ChEBI" id="CHEBI:57623"/>
    </ligand>
</feature>
<feature type="binding site" evidence="1">
    <location>
        <position position="282"/>
    </location>
    <ligand>
        <name>isopentenyl diphosphate</name>
        <dbReference type="ChEBI" id="CHEBI:128769"/>
    </ligand>
</feature>
<evidence type="ECO:0000255" key="1">
    <source>
        <dbReference type="HAMAP-Rule" id="MF_00191"/>
    </source>
</evidence>
<proteinExistence type="inferred from homology"/>
<dbReference type="EC" id="1.17.7.4" evidence="1"/>
<dbReference type="EMBL" id="BA000036">
    <property type="protein sequence ID" value="BAB98419.1"/>
    <property type="molecule type" value="Genomic_DNA"/>
</dbReference>
<dbReference type="EMBL" id="BX927151">
    <property type="protein sequence ID" value="CAF19728.1"/>
    <property type="molecule type" value="Genomic_DNA"/>
</dbReference>
<dbReference type="RefSeq" id="NP_600249.1">
    <property type="nucleotide sequence ID" value="NC_003450.3"/>
</dbReference>
<dbReference type="RefSeq" id="WP_004568094.1">
    <property type="nucleotide sequence ID" value="NC_006958.1"/>
</dbReference>
<dbReference type="SMR" id="Q8NRM2"/>
<dbReference type="STRING" id="196627.cg1164"/>
<dbReference type="KEGG" id="cgb:cg1164"/>
<dbReference type="KEGG" id="cgl:Cgl1026"/>
<dbReference type="PATRIC" id="fig|196627.13.peg.1004"/>
<dbReference type="eggNOG" id="COG0761">
    <property type="taxonomic scope" value="Bacteria"/>
</dbReference>
<dbReference type="HOGENOM" id="CLU_027486_1_0_11"/>
<dbReference type="OrthoDB" id="9804068at2"/>
<dbReference type="BioCyc" id="CORYNE:G18NG-10598-MONOMER"/>
<dbReference type="UniPathway" id="UPA00056">
    <property type="reaction ID" value="UER00097"/>
</dbReference>
<dbReference type="UniPathway" id="UPA00059">
    <property type="reaction ID" value="UER00105"/>
</dbReference>
<dbReference type="Proteomes" id="UP000000582">
    <property type="component" value="Chromosome"/>
</dbReference>
<dbReference type="Proteomes" id="UP000001009">
    <property type="component" value="Chromosome"/>
</dbReference>
<dbReference type="GO" id="GO:0051539">
    <property type="term" value="F:4 iron, 4 sulfur cluster binding"/>
    <property type="evidence" value="ECO:0007669"/>
    <property type="project" value="UniProtKB-UniRule"/>
</dbReference>
<dbReference type="GO" id="GO:0051745">
    <property type="term" value="F:4-hydroxy-3-methylbut-2-enyl diphosphate reductase activity"/>
    <property type="evidence" value="ECO:0007669"/>
    <property type="project" value="UniProtKB-UniRule"/>
</dbReference>
<dbReference type="GO" id="GO:0046872">
    <property type="term" value="F:metal ion binding"/>
    <property type="evidence" value="ECO:0007669"/>
    <property type="project" value="UniProtKB-KW"/>
</dbReference>
<dbReference type="GO" id="GO:0050992">
    <property type="term" value="P:dimethylallyl diphosphate biosynthetic process"/>
    <property type="evidence" value="ECO:0007669"/>
    <property type="project" value="UniProtKB-UniRule"/>
</dbReference>
<dbReference type="GO" id="GO:0019288">
    <property type="term" value="P:isopentenyl diphosphate biosynthetic process, methylerythritol 4-phosphate pathway"/>
    <property type="evidence" value="ECO:0007669"/>
    <property type="project" value="UniProtKB-UniRule"/>
</dbReference>
<dbReference type="GO" id="GO:0016114">
    <property type="term" value="P:terpenoid biosynthetic process"/>
    <property type="evidence" value="ECO:0007669"/>
    <property type="project" value="UniProtKB-UniRule"/>
</dbReference>
<dbReference type="CDD" id="cd13944">
    <property type="entry name" value="lytB_ispH"/>
    <property type="match status" value="1"/>
</dbReference>
<dbReference type="Gene3D" id="3.40.50.11270">
    <property type="match status" value="1"/>
</dbReference>
<dbReference type="Gene3D" id="3.40.1010.20">
    <property type="entry name" value="4-hydroxy-3-methylbut-2-enyl diphosphate reductase, catalytic domain"/>
    <property type="match status" value="2"/>
</dbReference>
<dbReference type="HAMAP" id="MF_00191">
    <property type="entry name" value="IspH"/>
    <property type="match status" value="1"/>
</dbReference>
<dbReference type="InterPro" id="IPR003451">
    <property type="entry name" value="LytB/IspH"/>
</dbReference>
<dbReference type="NCBIfam" id="TIGR00216">
    <property type="entry name" value="ispH_lytB"/>
    <property type="match status" value="1"/>
</dbReference>
<dbReference type="NCBIfam" id="NF002188">
    <property type="entry name" value="PRK01045.1-2"/>
    <property type="match status" value="1"/>
</dbReference>
<dbReference type="NCBIfam" id="NF002189">
    <property type="entry name" value="PRK01045.1-3"/>
    <property type="match status" value="1"/>
</dbReference>
<dbReference type="NCBIfam" id="NF002190">
    <property type="entry name" value="PRK01045.1-4"/>
    <property type="match status" value="1"/>
</dbReference>
<dbReference type="PANTHER" id="PTHR30426">
    <property type="entry name" value="4-HYDROXY-3-METHYLBUT-2-ENYL DIPHOSPHATE REDUCTASE"/>
    <property type="match status" value="1"/>
</dbReference>
<dbReference type="PANTHER" id="PTHR30426:SF0">
    <property type="entry name" value="4-HYDROXY-3-METHYLBUT-2-ENYL DIPHOSPHATE REDUCTASE"/>
    <property type="match status" value="1"/>
</dbReference>
<dbReference type="Pfam" id="PF02401">
    <property type="entry name" value="LYTB"/>
    <property type="match status" value="1"/>
</dbReference>
<reference key="1">
    <citation type="journal article" date="2003" name="Appl. Microbiol. Biotechnol.">
        <title>The Corynebacterium glutamicum genome: features and impacts on biotechnological processes.</title>
        <authorList>
            <person name="Ikeda M."/>
            <person name="Nakagawa S."/>
        </authorList>
    </citation>
    <scope>NUCLEOTIDE SEQUENCE [LARGE SCALE GENOMIC DNA]</scope>
    <source>
        <strain>ATCC 13032 / DSM 20300 / JCM 1318 / BCRC 11384 / CCUG 27702 / LMG 3730 / NBRC 12168 / NCIMB 10025 / NRRL B-2784 / 534</strain>
    </source>
</reference>
<reference key="2">
    <citation type="journal article" date="2003" name="J. Biotechnol.">
        <title>The complete Corynebacterium glutamicum ATCC 13032 genome sequence and its impact on the production of L-aspartate-derived amino acids and vitamins.</title>
        <authorList>
            <person name="Kalinowski J."/>
            <person name="Bathe B."/>
            <person name="Bartels D."/>
            <person name="Bischoff N."/>
            <person name="Bott M."/>
            <person name="Burkovski A."/>
            <person name="Dusch N."/>
            <person name="Eggeling L."/>
            <person name="Eikmanns B.J."/>
            <person name="Gaigalat L."/>
            <person name="Goesmann A."/>
            <person name="Hartmann M."/>
            <person name="Huthmacher K."/>
            <person name="Kraemer R."/>
            <person name="Linke B."/>
            <person name="McHardy A.C."/>
            <person name="Meyer F."/>
            <person name="Moeckel B."/>
            <person name="Pfefferle W."/>
            <person name="Puehler A."/>
            <person name="Rey D.A."/>
            <person name="Rueckert C."/>
            <person name="Rupp O."/>
            <person name="Sahm H."/>
            <person name="Wendisch V.F."/>
            <person name="Wiegraebe I."/>
            <person name="Tauch A."/>
        </authorList>
    </citation>
    <scope>NUCLEOTIDE SEQUENCE [LARGE SCALE GENOMIC DNA]</scope>
    <source>
        <strain>ATCC 13032 / DSM 20300 / JCM 1318 / BCRC 11384 / CCUG 27702 / LMG 3730 / NBRC 12168 / NCIMB 10025 / NRRL B-2784 / 534</strain>
    </source>
</reference>
<keyword id="KW-0004">4Fe-4S</keyword>
<keyword id="KW-0408">Iron</keyword>
<keyword id="KW-0411">Iron-sulfur</keyword>
<keyword id="KW-0414">Isoprene biosynthesis</keyword>
<keyword id="KW-0479">Metal-binding</keyword>
<keyword id="KW-0560">Oxidoreductase</keyword>
<keyword id="KW-1185">Reference proteome</keyword>
<comment type="function">
    <text evidence="1">Catalyzes the conversion of 1-hydroxy-2-methyl-2-(E)-butenyl 4-diphosphate (HMBPP) into a mixture of isopentenyl diphosphate (IPP) and dimethylallyl diphosphate (DMAPP). Acts in the terminal step of the DOXP/MEP pathway for isoprenoid precursor biosynthesis.</text>
</comment>
<comment type="catalytic activity">
    <reaction evidence="1">
        <text>isopentenyl diphosphate + 2 oxidized [2Fe-2S]-[ferredoxin] + H2O = (2E)-4-hydroxy-3-methylbut-2-enyl diphosphate + 2 reduced [2Fe-2S]-[ferredoxin] + 2 H(+)</text>
        <dbReference type="Rhea" id="RHEA:24488"/>
        <dbReference type="Rhea" id="RHEA-COMP:10000"/>
        <dbReference type="Rhea" id="RHEA-COMP:10001"/>
        <dbReference type="ChEBI" id="CHEBI:15377"/>
        <dbReference type="ChEBI" id="CHEBI:15378"/>
        <dbReference type="ChEBI" id="CHEBI:33737"/>
        <dbReference type="ChEBI" id="CHEBI:33738"/>
        <dbReference type="ChEBI" id="CHEBI:128753"/>
        <dbReference type="ChEBI" id="CHEBI:128769"/>
        <dbReference type="EC" id="1.17.7.4"/>
    </reaction>
</comment>
<comment type="catalytic activity">
    <reaction evidence="1">
        <text>dimethylallyl diphosphate + 2 oxidized [2Fe-2S]-[ferredoxin] + H2O = (2E)-4-hydroxy-3-methylbut-2-enyl diphosphate + 2 reduced [2Fe-2S]-[ferredoxin] + 2 H(+)</text>
        <dbReference type="Rhea" id="RHEA:24825"/>
        <dbReference type="Rhea" id="RHEA-COMP:10000"/>
        <dbReference type="Rhea" id="RHEA-COMP:10001"/>
        <dbReference type="ChEBI" id="CHEBI:15377"/>
        <dbReference type="ChEBI" id="CHEBI:15378"/>
        <dbReference type="ChEBI" id="CHEBI:33737"/>
        <dbReference type="ChEBI" id="CHEBI:33738"/>
        <dbReference type="ChEBI" id="CHEBI:57623"/>
        <dbReference type="ChEBI" id="CHEBI:128753"/>
        <dbReference type="EC" id="1.17.7.4"/>
    </reaction>
</comment>
<comment type="cofactor">
    <cofactor evidence="1">
        <name>[4Fe-4S] cluster</name>
        <dbReference type="ChEBI" id="CHEBI:49883"/>
    </cofactor>
    <text evidence="1">Binds 1 [4Fe-4S] cluster per subunit.</text>
</comment>
<comment type="pathway">
    <text evidence="1">Isoprenoid biosynthesis; dimethylallyl diphosphate biosynthesis; dimethylallyl diphosphate from (2E)-4-hydroxy-3-methylbutenyl diphosphate: step 1/1.</text>
</comment>
<comment type="pathway">
    <text evidence="1">Isoprenoid biosynthesis; isopentenyl diphosphate biosynthesis via DXP pathway; isopentenyl diphosphate from 1-deoxy-D-xylulose 5-phosphate: step 6/6.</text>
</comment>
<comment type="similarity">
    <text evidence="1">Belongs to the IspH family.</text>
</comment>
<gene>
    <name evidence="1" type="primary">ispH</name>
    <name type="synonym">lytB</name>
    <name type="ordered locus">Cgl1026</name>
    <name type="ordered locus">cg1164</name>
</gene>